<gene>
    <name evidence="1" type="primary">engB</name>
    <name type="ordered locus">CD630_33000</name>
</gene>
<dbReference type="EMBL" id="AM180355">
    <property type="protein sequence ID" value="CAJ70197.1"/>
    <property type="status" value="ALT_INIT"/>
    <property type="molecule type" value="Genomic_DNA"/>
</dbReference>
<dbReference type="RefSeq" id="YP_001089816.1">
    <property type="nucleotide sequence ID" value="NC_009089.1"/>
</dbReference>
<dbReference type="SMR" id="Q180E5"/>
<dbReference type="STRING" id="272563.CD630_33000"/>
<dbReference type="EnsemblBacteria" id="CAJ70197">
    <property type="protein sequence ID" value="CAJ70197"/>
    <property type="gene ID" value="CD630_33000"/>
</dbReference>
<dbReference type="KEGG" id="cdf:CD630_33000"/>
<dbReference type="KEGG" id="pdc:CDIF630_03601"/>
<dbReference type="PATRIC" id="fig|272563.120.peg.3485"/>
<dbReference type="eggNOG" id="COG0218">
    <property type="taxonomic scope" value="Bacteria"/>
</dbReference>
<dbReference type="OrthoDB" id="9804921at2"/>
<dbReference type="PhylomeDB" id="Q180E5"/>
<dbReference type="BioCyc" id="PDIF272563:G12WB-3467-MONOMER"/>
<dbReference type="Proteomes" id="UP000001978">
    <property type="component" value="Chromosome"/>
</dbReference>
<dbReference type="GO" id="GO:0005829">
    <property type="term" value="C:cytosol"/>
    <property type="evidence" value="ECO:0007669"/>
    <property type="project" value="TreeGrafter"/>
</dbReference>
<dbReference type="GO" id="GO:0005525">
    <property type="term" value="F:GTP binding"/>
    <property type="evidence" value="ECO:0007669"/>
    <property type="project" value="UniProtKB-UniRule"/>
</dbReference>
<dbReference type="GO" id="GO:0046872">
    <property type="term" value="F:metal ion binding"/>
    <property type="evidence" value="ECO:0007669"/>
    <property type="project" value="UniProtKB-KW"/>
</dbReference>
<dbReference type="GO" id="GO:0000917">
    <property type="term" value="P:division septum assembly"/>
    <property type="evidence" value="ECO:0007669"/>
    <property type="project" value="UniProtKB-KW"/>
</dbReference>
<dbReference type="CDD" id="cd01876">
    <property type="entry name" value="YihA_EngB"/>
    <property type="match status" value="1"/>
</dbReference>
<dbReference type="FunFam" id="3.40.50.300:FF:000098">
    <property type="entry name" value="Probable GTP-binding protein EngB"/>
    <property type="match status" value="1"/>
</dbReference>
<dbReference type="Gene3D" id="3.40.50.300">
    <property type="entry name" value="P-loop containing nucleotide triphosphate hydrolases"/>
    <property type="match status" value="1"/>
</dbReference>
<dbReference type="HAMAP" id="MF_00321">
    <property type="entry name" value="GTPase_EngB"/>
    <property type="match status" value="1"/>
</dbReference>
<dbReference type="InterPro" id="IPR030393">
    <property type="entry name" value="G_ENGB_dom"/>
</dbReference>
<dbReference type="InterPro" id="IPR006073">
    <property type="entry name" value="GTP-bd"/>
</dbReference>
<dbReference type="InterPro" id="IPR019987">
    <property type="entry name" value="GTP-bd_ribosome_bio_YsxC"/>
</dbReference>
<dbReference type="InterPro" id="IPR027417">
    <property type="entry name" value="P-loop_NTPase"/>
</dbReference>
<dbReference type="NCBIfam" id="TIGR03598">
    <property type="entry name" value="GTPase_YsxC"/>
    <property type="match status" value="1"/>
</dbReference>
<dbReference type="PANTHER" id="PTHR11649:SF13">
    <property type="entry name" value="ENGB-TYPE G DOMAIN-CONTAINING PROTEIN"/>
    <property type="match status" value="1"/>
</dbReference>
<dbReference type="PANTHER" id="PTHR11649">
    <property type="entry name" value="MSS1/TRME-RELATED GTP-BINDING PROTEIN"/>
    <property type="match status" value="1"/>
</dbReference>
<dbReference type="Pfam" id="PF01926">
    <property type="entry name" value="MMR_HSR1"/>
    <property type="match status" value="1"/>
</dbReference>
<dbReference type="SUPFAM" id="SSF52540">
    <property type="entry name" value="P-loop containing nucleoside triphosphate hydrolases"/>
    <property type="match status" value="1"/>
</dbReference>
<dbReference type="PROSITE" id="PS51706">
    <property type="entry name" value="G_ENGB"/>
    <property type="match status" value="1"/>
</dbReference>
<keyword id="KW-0131">Cell cycle</keyword>
<keyword id="KW-0132">Cell division</keyword>
<keyword id="KW-0342">GTP-binding</keyword>
<keyword id="KW-0460">Magnesium</keyword>
<keyword id="KW-0479">Metal-binding</keyword>
<keyword id="KW-0547">Nucleotide-binding</keyword>
<keyword id="KW-1185">Reference proteome</keyword>
<keyword id="KW-0717">Septation</keyword>
<proteinExistence type="inferred from homology"/>
<comment type="function">
    <text evidence="1">Necessary for normal cell division and for the maintenance of normal septation.</text>
</comment>
<comment type="cofactor">
    <cofactor evidence="1">
        <name>Mg(2+)</name>
        <dbReference type="ChEBI" id="CHEBI:18420"/>
    </cofactor>
</comment>
<comment type="similarity">
    <text evidence="1">Belongs to the TRAFAC class TrmE-Era-EngA-EngB-Septin-like GTPase superfamily. EngB GTPase family.</text>
</comment>
<comment type="sequence caution" evidence="2">
    <conflict type="erroneous initiation">
        <sequence resource="EMBL-CDS" id="CAJ70197"/>
    </conflict>
</comment>
<feature type="chain" id="PRO_0000266843" description="Probable GTP-binding protein EngB">
    <location>
        <begin position="1"/>
        <end position="203"/>
    </location>
</feature>
<feature type="domain" description="EngB-type G" evidence="1">
    <location>
        <begin position="22"/>
        <end position="195"/>
    </location>
</feature>
<feature type="binding site" evidence="1">
    <location>
        <begin position="30"/>
        <end position="37"/>
    </location>
    <ligand>
        <name>GTP</name>
        <dbReference type="ChEBI" id="CHEBI:37565"/>
    </ligand>
</feature>
<feature type="binding site" evidence="1">
    <location>
        <position position="37"/>
    </location>
    <ligand>
        <name>Mg(2+)</name>
        <dbReference type="ChEBI" id="CHEBI:18420"/>
    </ligand>
</feature>
<feature type="binding site" evidence="1">
    <location>
        <begin position="57"/>
        <end position="61"/>
    </location>
    <ligand>
        <name>GTP</name>
        <dbReference type="ChEBI" id="CHEBI:37565"/>
    </ligand>
</feature>
<feature type="binding site" evidence="1">
    <location>
        <position position="59"/>
    </location>
    <ligand>
        <name>Mg(2+)</name>
        <dbReference type="ChEBI" id="CHEBI:18420"/>
    </ligand>
</feature>
<feature type="binding site" evidence="1">
    <location>
        <begin position="75"/>
        <end position="78"/>
    </location>
    <ligand>
        <name>GTP</name>
        <dbReference type="ChEBI" id="CHEBI:37565"/>
    </ligand>
</feature>
<feature type="binding site" evidence="1">
    <location>
        <begin position="142"/>
        <end position="145"/>
    </location>
    <ligand>
        <name>GTP</name>
        <dbReference type="ChEBI" id="CHEBI:37565"/>
    </ligand>
</feature>
<feature type="binding site" evidence="1">
    <location>
        <begin position="174"/>
        <end position="176"/>
    </location>
    <ligand>
        <name>GTP</name>
        <dbReference type="ChEBI" id="CHEBI:37565"/>
    </ligand>
</feature>
<reference key="1">
    <citation type="journal article" date="2006" name="Nat. Genet.">
        <title>The multidrug-resistant human pathogen Clostridium difficile has a highly mobile, mosaic genome.</title>
        <authorList>
            <person name="Sebaihia M."/>
            <person name="Wren B.W."/>
            <person name="Mullany P."/>
            <person name="Fairweather N.F."/>
            <person name="Minton N."/>
            <person name="Stabler R."/>
            <person name="Thomson N.R."/>
            <person name="Roberts A.P."/>
            <person name="Cerdeno-Tarraga A.M."/>
            <person name="Wang H."/>
            <person name="Holden M.T.G."/>
            <person name="Wright A."/>
            <person name="Churcher C."/>
            <person name="Quail M.A."/>
            <person name="Baker S."/>
            <person name="Bason N."/>
            <person name="Brooks K."/>
            <person name="Chillingworth T."/>
            <person name="Cronin A."/>
            <person name="Davis P."/>
            <person name="Dowd L."/>
            <person name="Fraser A."/>
            <person name="Feltwell T."/>
            <person name="Hance Z."/>
            <person name="Holroyd S."/>
            <person name="Jagels K."/>
            <person name="Moule S."/>
            <person name="Mungall K."/>
            <person name="Price C."/>
            <person name="Rabbinowitsch E."/>
            <person name="Sharp S."/>
            <person name="Simmonds M."/>
            <person name="Stevens K."/>
            <person name="Unwin L."/>
            <person name="Whithead S."/>
            <person name="Dupuy B."/>
            <person name="Dougan G."/>
            <person name="Barrell B."/>
            <person name="Parkhill J."/>
        </authorList>
    </citation>
    <scope>NUCLEOTIDE SEQUENCE [LARGE SCALE GENOMIC DNA]</scope>
    <source>
        <strain>630</strain>
    </source>
</reference>
<organism>
    <name type="scientific">Clostridioides difficile (strain 630)</name>
    <name type="common">Peptoclostridium difficile</name>
    <dbReference type="NCBI Taxonomy" id="272563"/>
    <lineage>
        <taxon>Bacteria</taxon>
        <taxon>Bacillati</taxon>
        <taxon>Bacillota</taxon>
        <taxon>Clostridia</taxon>
        <taxon>Peptostreptococcales</taxon>
        <taxon>Peptostreptococcaceae</taxon>
        <taxon>Clostridioides</taxon>
    </lineage>
</organism>
<evidence type="ECO:0000255" key="1">
    <source>
        <dbReference type="HAMAP-Rule" id="MF_00321"/>
    </source>
</evidence>
<evidence type="ECO:0000305" key="2"/>
<sequence>MKIRSSEITMSAVNKSQYPAEGIPEIALAGRSNVGKSSIINTLLNRRNFARTSQTPGKTRTINFYLINNEFYFVDLPGYGYAKIAKSEKEKWGGIMERYLESRQELCSIFLLVDIRHEPTADDKLMYEWIKHFGYNCVVIATKADKISRGQYQKHISIIRKKLQMESSEKVIPVSSLKKTGVEELWEEIVNQYNQHGYEITVD</sequence>
<name>ENGB_CLOD6</name>
<protein>
    <recommendedName>
        <fullName evidence="1">Probable GTP-binding protein EngB</fullName>
    </recommendedName>
</protein>
<accession>Q180E5</accession>